<name>MTP2_PROHU</name>
<sequence length="336" mass="38365">MMTLNLQTMSSNDMLNFGKKPAYTTSNGSMYIGDSLELLESFPDESISLVMTSPPFALQRKKEYGNLEQHEYVDWFLSFAKVVNKKLKPDGSFVVDFGGAYMKGVPARSIYNFRVLIRMIDEVGFFLAEDFYWFNPSKLPSPIEWVNKRKIRVKDAVNTVWWFSKTEWPKSDITKVLAPYSDRMKKLIEDPDKFYTPKTRPSGHDIGKSFSKDNGGSIPPNLLQISNSESNGQYLANCKLMGIKAHPARFPAKLPEFFIRMLTEPDDLVVDIFGGSNTTGLVAERESRKWISFEMKPEYVAASAFRFLDNNISEEKITDIYNRILNGESLDLNSII</sequence>
<organism>
    <name type="scientific">Proteus hauseri</name>
    <dbReference type="NCBI Taxonomy" id="183417"/>
    <lineage>
        <taxon>Bacteria</taxon>
        <taxon>Pseudomonadati</taxon>
        <taxon>Pseudomonadota</taxon>
        <taxon>Gammaproteobacteria</taxon>
        <taxon>Enterobacterales</taxon>
        <taxon>Morganellaceae</taxon>
        <taxon>Proteus</taxon>
    </lineage>
</organism>
<keyword id="KW-0002">3D-structure</keyword>
<keyword id="KW-0238">DNA-binding</keyword>
<keyword id="KW-0489">Methyltransferase</keyword>
<keyword id="KW-0677">Repeat</keyword>
<keyword id="KW-0680">Restriction system</keyword>
<keyword id="KW-0949">S-adenosyl-L-methionine</keyword>
<keyword id="KW-0808">Transferase</keyword>
<feature type="chain" id="PRO_0000087931" description="Type II methyltransferase M.PvuII">
    <location>
        <begin position="1"/>
        <end position="336"/>
    </location>
</feature>
<feature type="repeat" description="1">
    <location>
        <begin position="11"/>
        <end position="113"/>
    </location>
</feature>
<feature type="repeat" description="2">
    <location>
        <begin position="181"/>
        <end position="293"/>
    </location>
</feature>
<feature type="region of interest" description="Disordered" evidence="1">
    <location>
        <begin position="196"/>
        <end position="215"/>
    </location>
</feature>
<feature type="compositionally biased region" description="Basic and acidic residues" evidence="1">
    <location>
        <begin position="202"/>
        <end position="211"/>
    </location>
</feature>
<feature type="sequence conflict" description="In Ref. 1; CAA32026." evidence="5" ref="1">
    <original>D</original>
    <variation>E</variation>
    <location>
        <position position="44"/>
    </location>
</feature>
<feature type="strand" evidence="7">
    <location>
        <begin position="22"/>
        <end position="24"/>
    </location>
</feature>
<feature type="strand" evidence="7">
    <location>
        <begin position="26"/>
        <end position="33"/>
    </location>
</feature>
<feature type="helix" evidence="7">
    <location>
        <begin position="35"/>
        <end position="38"/>
    </location>
</feature>
<feature type="helix" evidence="7">
    <location>
        <begin position="39"/>
        <end position="41"/>
    </location>
</feature>
<feature type="strand" evidence="7">
    <location>
        <begin position="47"/>
        <end position="52"/>
    </location>
</feature>
<feature type="strand" evidence="7">
    <location>
        <begin position="57"/>
        <end position="59"/>
    </location>
</feature>
<feature type="helix" evidence="7">
    <location>
        <begin position="68"/>
        <end position="86"/>
    </location>
</feature>
<feature type="strand" evidence="7">
    <location>
        <begin position="87"/>
        <end position="97"/>
    </location>
</feature>
<feature type="strand" evidence="7">
    <location>
        <begin position="105"/>
        <end position="108"/>
    </location>
</feature>
<feature type="helix" evidence="7">
    <location>
        <begin position="111"/>
        <end position="121"/>
    </location>
</feature>
<feature type="strand" evidence="7">
    <location>
        <begin position="126"/>
        <end position="134"/>
    </location>
</feature>
<feature type="helix" evidence="7">
    <location>
        <begin position="144"/>
        <end position="148"/>
    </location>
</feature>
<feature type="strand" evidence="7">
    <location>
        <begin position="157"/>
        <end position="168"/>
    </location>
</feature>
<feature type="helix" evidence="7">
    <location>
        <begin position="173"/>
        <end position="175"/>
    </location>
</feature>
<feature type="strand" evidence="7">
    <location>
        <begin position="221"/>
        <end position="224"/>
    </location>
</feature>
<feature type="helix" evidence="7">
    <location>
        <begin position="232"/>
        <end position="240"/>
    </location>
</feature>
<feature type="helix" evidence="7">
    <location>
        <begin position="253"/>
        <end position="262"/>
    </location>
</feature>
<feature type="strand" evidence="7">
    <location>
        <begin position="268"/>
        <end position="271"/>
    </location>
</feature>
<feature type="helix" evidence="7">
    <location>
        <begin position="278"/>
        <end position="285"/>
    </location>
</feature>
<feature type="strand" evidence="7">
    <location>
        <begin position="289"/>
        <end position="295"/>
    </location>
</feature>
<feature type="helix" evidence="7">
    <location>
        <begin position="297"/>
        <end position="304"/>
    </location>
</feature>
<feature type="helix" evidence="7">
    <location>
        <begin position="305"/>
        <end position="307"/>
    </location>
</feature>
<feature type="helix" evidence="7">
    <location>
        <begin position="314"/>
        <end position="325"/>
    </location>
</feature>
<dbReference type="EC" id="2.1.1.113"/>
<dbReference type="EMBL" id="X13778">
    <property type="protein sequence ID" value="CAA32026.1"/>
    <property type="molecule type" value="Genomic_DNA"/>
</dbReference>
<dbReference type="EMBL" id="AF305615">
    <property type="protein sequence ID" value="AAA96336.1"/>
    <property type="molecule type" value="Genomic_DNA"/>
</dbReference>
<dbReference type="PIR" id="S04739">
    <property type="entry name" value="S04739"/>
</dbReference>
<dbReference type="RefSeq" id="WP_010904457.1">
    <property type="nucleotide sequence ID" value="NZ_PGWU01000024.1"/>
</dbReference>
<dbReference type="PDB" id="1BOO">
    <property type="method" value="X-ray"/>
    <property type="resolution" value="2.80 A"/>
    <property type="chains" value="A=14-336"/>
</dbReference>
<dbReference type="PDBsum" id="1BOO"/>
<dbReference type="SMR" id="P11409"/>
<dbReference type="STRING" id="1354271.M997_3410"/>
<dbReference type="DrugBank" id="DB01752">
    <property type="generic name" value="S-adenosyl-L-homocysteine"/>
</dbReference>
<dbReference type="REBASE" id="182811">
    <property type="entry name" value="M.DspNSZ14ORF374P"/>
</dbReference>
<dbReference type="REBASE" id="3485">
    <property type="entry name" value="M.PvuII"/>
</dbReference>
<dbReference type="BRENDA" id="2.1.1.113">
    <property type="organism ID" value="14542"/>
</dbReference>
<dbReference type="EvolutionaryTrace" id="P11409"/>
<dbReference type="PRO" id="PR:P11409"/>
<dbReference type="GO" id="GO:0003677">
    <property type="term" value="F:DNA binding"/>
    <property type="evidence" value="ECO:0007669"/>
    <property type="project" value="UniProtKB-KW"/>
</dbReference>
<dbReference type="GO" id="GO:0008170">
    <property type="term" value="F:N-methyltransferase activity"/>
    <property type="evidence" value="ECO:0000314"/>
    <property type="project" value="CAFA"/>
</dbReference>
<dbReference type="GO" id="GO:0015667">
    <property type="term" value="F:site-specific DNA-methyltransferase (cytosine-N4-specific) activity"/>
    <property type="evidence" value="ECO:0000314"/>
    <property type="project" value="CAFA"/>
</dbReference>
<dbReference type="GO" id="GO:0009307">
    <property type="term" value="P:DNA restriction-modification system"/>
    <property type="evidence" value="ECO:0007669"/>
    <property type="project" value="UniProtKB-KW"/>
</dbReference>
<dbReference type="GO" id="GO:0032259">
    <property type="term" value="P:methylation"/>
    <property type="evidence" value="ECO:0007669"/>
    <property type="project" value="UniProtKB-KW"/>
</dbReference>
<dbReference type="FunFam" id="3.40.50.150:FF:001210">
    <property type="entry name" value="Modification methylase PvuII"/>
    <property type="match status" value="1"/>
</dbReference>
<dbReference type="Gene3D" id="3.40.50.150">
    <property type="entry name" value="Vaccinia Virus protein VP39"/>
    <property type="match status" value="1"/>
</dbReference>
<dbReference type="InterPro" id="IPR002941">
    <property type="entry name" value="DNA_methylase_N4/N6"/>
</dbReference>
<dbReference type="InterPro" id="IPR017985">
    <property type="entry name" value="MeTrfase_CN4_CS"/>
</dbReference>
<dbReference type="InterPro" id="IPR001091">
    <property type="entry name" value="RM_Methyltransferase"/>
</dbReference>
<dbReference type="InterPro" id="IPR029063">
    <property type="entry name" value="SAM-dependent_MTases_sf"/>
</dbReference>
<dbReference type="Pfam" id="PF01555">
    <property type="entry name" value="N6_N4_Mtase"/>
    <property type="match status" value="1"/>
</dbReference>
<dbReference type="PRINTS" id="PR00508">
    <property type="entry name" value="S21N4MTFRASE"/>
</dbReference>
<dbReference type="SUPFAM" id="SSF53335">
    <property type="entry name" value="S-adenosyl-L-methionine-dependent methyltransferases"/>
    <property type="match status" value="1"/>
</dbReference>
<dbReference type="PROSITE" id="PS00093">
    <property type="entry name" value="N4_MTASE"/>
    <property type="match status" value="1"/>
</dbReference>
<proteinExistence type="evidence at protein level"/>
<evidence type="ECO:0000256" key="1">
    <source>
        <dbReference type="SAM" id="MobiDB-lite"/>
    </source>
</evidence>
<evidence type="ECO:0000269" key="2">
    <source>
    </source>
</evidence>
<evidence type="ECO:0000303" key="3">
    <source>
    </source>
</evidence>
<evidence type="ECO:0000303" key="4">
    <source>
    </source>
</evidence>
<evidence type="ECO:0000305" key="5"/>
<evidence type="ECO:0007744" key="6">
    <source>
        <dbReference type="PDB" id="1BOO"/>
    </source>
</evidence>
<evidence type="ECO:0007829" key="7">
    <source>
        <dbReference type="PDB" id="1BOO"/>
    </source>
</evidence>
<accession>P11409</accession>
<comment type="function">
    <text evidence="3">A beta subtype methylase, recognizes the double-stranded sequence 5'-CAGCTG-3', methylates C-4 on both strands, and protects the DNA from cleavage by the PvuII endonuclease.</text>
</comment>
<comment type="catalytic activity">
    <reaction>
        <text>a 2'-deoxycytidine in DNA + S-adenosyl-L-methionine = an N(4)-methyl-2'-deoxycytidine in DNA + S-adenosyl-L-homocysteine + H(+)</text>
        <dbReference type="Rhea" id="RHEA:16857"/>
        <dbReference type="Rhea" id="RHEA-COMP:11369"/>
        <dbReference type="Rhea" id="RHEA-COMP:13674"/>
        <dbReference type="ChEBI" id="CHEBI:15378"/>
        <dbReference type="ChEBI" id="CHEBI:57856"/>
        <dbReference type="ChEBI" id="CHEBI:59789"/>
        <dbReference type="ChEBI" id="CHEBI:85452"/>
        <dbReference type="ChEBI" id="CHEBI:137933"/>
        <dbReference type="EC" id="2.1.1.113"/>
    </reaction>
</comment>
<comment type="subunit">
    <text evidence="2">Monomer.</text>
</comment>
<comment type="similarity">
    <text evidence="5">Belongs to the N(4)/N(6)-methyltransferase family. N(4) subfamily.</text>
</comment>
<gene>
    <name evidence="4" type="primary">pvuIIM</name>
</gene>
<reference key="1">
    <citation type="journal article" date="1989" name="Nucleic Acids Res.">
        <title>Sequence, internal homology and high-level expression of the gene for a DNA-(cytosine N4)-methyltransferase, M.Pvu II.</title>
        <authorList>
            <person name="Tao T."/>
            <person name="Walter J."/>
            <person name="Brennan K.J."/>
            <person name="Cotterman M.M."/>
            <person name="Blumenthal R.M."/>
        </authorList>
    </citation>
    <scope>NUCLEOTIDE SEQUENCE [GENOMIC DNA]</scope>
    <source>
        <strain>ATCC 13315 / DSM 30118 / JCM 1668 / NBRC 3851 / NCIMB 4175 / NCTC 4175 / NRRL B-3405</strain>
    </source>
</reference>
<reference key="2">
    <citation type="journal article" date="1995" name="Gene">
        <title>Gene pvuIIW: a possible modulator of PvuII endonuclease subunit association.</title>
        <authorList>
            <person name="Adams G.M."/>
            <person name="Blumenthal R.M."/>
        </authorList>
    </citation>
    <scope>NUCLEOTIDE SEQUENCE [GENOMIC DNA] OF 1-80</scope>
    <scope>SEQUENCE REVISION TO 44</scope>
    <source>
        <strain>ATCC 13315 / DSM 30118 / JCM 1668 / NBRC 3851 / NCIMB 4175 / NCTC 4175 / NRRL B-3405</strain>
    </source>
</reference>
<reference key="3">
    <citation type="journal article" date="2003" name="Nucleic Acids Res.">
        <title>A nomenclature for restriction enzymes, DNA methyltransferases, homing endonucleases and their genes.</title>
        <authorList>
            <person name="Roberts R.J."/>
            <person name="Belfort M."/>
            <person name="Bestor T."/>
            <person name="Bhagwat A.S."/>
            <person name="Bickle T.A."/>
            <person name="Bitinaite J."/>
            <person name="Blumenthal R.M."/>
            <person name="Degtyarev S.K."/>
            <person name="Dryden D.T."/>
            <person name="Dybvig K."/>
            <person name="Firman K."/>
            <person name="Gromova E.S."/>
            <person name="Gumport R.I."/>
            <person name="Halford S.E."/>
            <person name="Hattman S."/>
            <person name="Heitman J."/>
            <person name="Hornby D.P."/>
            <person name="Janulaitis A."/>
            <person name="Jeltsch A."/>
            <person name="Josephsen J."/>
            <person name="Kiss A."/>
            <person name="Klaenhammer T.R."/>
            <person name="Kobayashi I."/>
            <person name="Kong H."/>
            <person name="Krueger D.H."/>
            <person name="Lacks S."/>
            <person name="Marinus M.G."/>
            <person name="Miyahara M."/>
            <person name="Morgan R.D."/>
            <person name="Murray N.E."/>
            <person name="Nagaraja V."/>
            <person name="Piekarowicz A."/>
            <person name="Pingoud A."/>
            <person name="Raleigh E."/>
            <person name="Rao D.N."/>
            <person name="Reich N."/>
            <person name="Repin V.E."/>
            <person name="Selker E.U."/>
            <person name="Shaw P.C."/>
            <person name="Stein D.C."/>
            <person name="Stoddard B.L."/>
            <person name="Szybalski W."/>
            <person name="Trautner T.A."/>
            <person name="Van Etten J.L."/>
            <person name="Vitor J.M."/>
            <person name="Wilson G.G."/>
            <person name="Xu S.Y."/>
        </authorList>
    </citation>
    <scope>NOMENCLATURE</scope>
    <scope>SUBTYPE</scope>
</reference>
<reference evidence="6" key="4">
    <citation type="journal article" date="1997" name="Nucleic Acids Res.">
        <title>Structure of Pvu II DNA-(cytosine N4) methyltransferase, an example of domain permutation and protein fold assignment.</title>
        <authorList>
            <person name="Gong W."/>
            <person name="O'Gara M."/>
            <person name="Blumenthal R.M."/>
            <person name="Cheng X."/>
        </authorList>
    </citation>
    <scope>X-RAY CRYSTALLOGRAPHY (2.8 ANGSTROMS) OF 14-336</scope>
    <scope>SUBUNIT</scope>
</reference>
<protein>
    <recommendedName>
        <fullName evidence="3">Type II methyltransferase M.PvuII</fullName>
        <shortName evidence="4">M.PvuII</shortName>
        <ecNumber>2.1.1.113</ecNumber>
    </recommendedName>
    <alternativeName>
        <fullName>Modification methylase PvuII</fullName>
    </alternativeName>
    <alternativeName>
        <fullName>N-4 cytosine-specific methyltransferase PvuII</fullName>
    </alternativeName>
</protein>